<keyword id="KW-0106">Calcium</keyword>
<keyword id="KW-0147">Chitin-binding</keyword>
<keyword id="KW-1015">Disulfide bond</keyword>
<keyword id="KW-0325">Glycoprotein</keyword>
<keyword id="KW-0472">Membrane</keyword>
<keyword id="KW-0479">Metal-binding</keyword>
<keyword id="KW-1185">Reference proteome</keyword>
<keyword id="KW-0735">Signal-anchor</keyword>
<keyword id="KW-0812">Transmembrane</keyword>
<keyword id="KW-1133">Transmembrane helix</keyword>
<name>FBCD1_MACFA</name>
<dbReference type="EMBL" id="AB071099">
    <property type="protein sequence ID" value="BAB64493.1"/>
    <property type="molecule type" value="mRNA"/>
</dbReference>
<dbReference type="RefSeq" id="NP_001274638.1">
    <property type="nucleotide sequence ID" value="NM_001287709.1"/>
</dbReference>
<dbReference type="RefSeq" id="XP_015291592.1">
    <property type="nucleotide sequence ID" value="XM_015436106.1"/>
</dbReference>
<dbReference type="RefSeq" id="XP_065386065.1">
    <property type="nucleotide sequence ID" value="XM_065529993.1"/>
</dbReference>
<dbReference type="SMR" id="Q95LU3"/>
<dbReference type="STRING" id="9541.ENSMFAP00000033424"/>
<dbReference type="GlyCosmos" id="Q95LU3">
    <property type="glycosylation" value="1 site, No reported glycans"/>
</dbReference>
<dbReference type="GeneID" id="102115035"/>
<dbReference type="eggNOG" id="KOG2579">
    <property type="taxonomic scope" value="Eukaryota"/>
</dbReference>
<dbReference type="Proteomes" id="UP000233100">
    <property type="component" value="Unplaced"/>
</dbReference>
<dbReference type="GO" id="GO:0005615">
    <property type="term" value="C:extracellular space"/>
    <property type="evidence" value="ECO:0007669"/>
    <property type="project" value="TreeGrafter"/>
</dbReference>
<dbReference type="GO" id="GO:0016020">
    <property type="term" value="C:membrane"/>
    <property type="evidence" value="ECO:0000250"/>
    <property type="project" value="UniProtKB"/>
</dbReference>
<dbReference type="GO" id="GO:0008061">
    <property type="term" value="F:chitin binding"/>
    <property type="evidence" value="ECO:0000250"/>
    <property type="project" value="UniProtKB"/>
</dbReference>
<dbReference type="GO" id="GO:0046872">
    <property type="term" value="F:metal ion binding"/>
    <property type="evidence" value="ECO:0007669"/>
    <property type="project" value="UniProtKB-KW"/>
</dbReference>
<dbReference type="CDD" id="cd00087">
    <property type="entry name" value="FReD"/>
    <property type="match status" value="1"/>
</dbReference>
<dbReference type="FunFam" id="3.90.215.10:FF:000001">
    <property type="entry name" value="Tenascin isoform 1"/>
    <property type="match status" value="1"/>
</dbReference>
<dbReference type="Gene3D" id="3.90.215.10">
    <property type="entry name" value="Gamma Fibrinogen, chain A, domain 1"/>
    <property type="match status" value="1"/>
</dbReference>
<dbReference type="InterPro" id="IPR036056">
    <property type="entry name" value="Fibrinogen-like_C"/>
</dbReference>
<dbReference type="InterPro" id="IPR014716">
    <property type="entry name" value="Fibrinogen_a/b/g_C_1"/>
</dbReference>
<dbReference type="InterPro" id="IPR002181">
    <property type="entry name" value="Fibrinogen_a/b/g_C_dom"/>
</dbReference>
<dbReference type="InterPro" id="IPR050373">
    <property type="entry name" value="Fibrinogen_C-term_domain"/>
</dbReference>
<dbReference type="InterPro" id="IPR020837">
    <property type="entry name" value="Fibrinogen_CS"/>
</dbReference>
<dbReference type="NCBIfam" id="NF040941">
    <property type="entry name" value="GGGWT_bact"/>
    <property type="match status" value="1"/>
</dbReference>
<dbReference type="PANTHER" id="PTHR19143:SF45">
    <property type="entry name" value="FIBRINOGEN C DOMAIN-CONTAINING PROTEIN 1"/>
    <property type="match status" value="1"/>
</dbReference>
<dbReference type="PANTHER" id="PTHR19143">
    <property type="entry name" value="FIBRINOGEN/TENASCIN/ANGIOPOEITIN"/>
    <property type="match status" value="1"/>
</dbReference>
<dbReference type="Pfam" id="PF00147">
    <property type="entry name" value="Fibrinogen_C"/>
    <property type="match status" value="1"/>
</dbReference>
<dbReference type="SMART" id="SM00186">
    <property type="entry name" value="FBG"/>
    <property type="match status" value="1"/>
</dbReference>
<dbReference type="SUPFAM" id="SSF56496">
    <property type="entry name" value="Fibrinogen C-terminal domain-like"/>
    <property type="match status" value="1"/>
</dbReference>
<dbReference type="PROSITE" id="PS00514">
    <property type="entry name" value="FIBRINOGEN_C_1"/>
    <property type="match status" value="1"/>
</dbReference>
<dbReference type="PROSITE" id="PS51406">
    <property type="entry name" value="FIBRINOGEN_C_2"/>
    <property type="match status" value="1"/>
</dbReference>
<accession>Q95LU3</accession>
<organism>
    <name type="scientific">Macaca fascicularis</name>
    <name type="common">Crab-eating macaque</name>
    <name type="synonym">Cynomolgus monkey</name>
    <dbReference type="NCBI Taxonomy" id="9541"/>
    <lineage>
        <taxon>Eukaryota</taxon>
        <taxon>Metazoa</taxon>
        <taxon>Chordata</taxon>
        <taxon>Craniata</taxon>
        <taxon>Vertebrata</taxon>
        <taxon>Euteleostomi</taxon>
        <taxon>Mammalia</taxon>
        <taxon>Eutheria</taxon>
        <taxon>Euarchontoglires</taxon>
        <taxon>Primates</taxon>
        <taxon>Haplorrhini</taxon>
        <taxon>Catarrhini</taxon>
        <taxon>Cercopithecidae</taxon>
        <taxon>Cercopithecinae</taxon>
        <taxon>Macaca</taxon>
    </lineage>
</organism>
<reference key="1">
    <citation type="journal article" date="2002" name="BMC Genomics">
        <title>Cynomolgus monkey testicular cDNAs for discovery of novel human genes in the human genome sequence.</title>
        <authorList>
            <person name="Osada N."/>
            <person name="Hida M."/>
            <person name="Kusuda J."/>
            <person name="Tanuma R."/>
            <person name="Hirata M."/>
            <person name="Suto Y."/>
            <person name="Hirai M."/>
            <person name="Terao K."/>
            <person name="Sugano S."/>
            <person name="Hashimoto K."/>
        </authorList>
    </citation>
    <scope>NUCLEOTIDE SEQUENCE [LARGE SCALE MRNA]</scope>
    <source>
        <tissue>Testis</tissue>
    </source>
</reference>
<comment type="function">
    <text evidence="1">Acetyl group-binding receptor which shows a high-affinity and calcium-dependent binding to acetylated structures such as chitin, some N-acetylated carbohydrates, and amino acids, but not to their non-acetylated counterparts. Can facilitate the endocytosis of acetylated components (By similarity).</text>
</comment>
<comment type="subunit">
    <text evidence="1">Homotetramer; disulfide-linked.</text>
</comment>
<comment type="subcellular location">
    <subcellularLocation>
        <location evidence="4">Membrane</location>
        <topology evidence="4">Single-pass type II membrane protein</topology>
    </subcellularLocation>
</comment>
<evidence type="ECO:0000250" key="1"/>
<evidence type="ECO:0000255" key="2"/>
<evidence type="ECO:0000255" key="3">
    <source>
        <dbReference type="PROSITE-ProRule" id="PRU00739"/>
    </source>
</evidence>
<evidence type="ECO:0000305" key="4"/>
<protein>
    <recommendedName>
        <fullName>Fibrinogen C domain-containing protein 1</fullName>
    </recommendedName>
</protein>
<proteinExistence type="evidence at transcript level"/>
<gene>
    <name type="primary">FIBCD1</name>
    <name type="ORF">QtsA-17952</name>
</gene>
<sequence length="431" mass="47323">MLCTVLLALAVLLAVAVTGAVLFLNHTHTPGTAPPPVVSTGAAGANSALVTVERADSSRLSILIDPRCPDLADSFARLESAQASVLEALTEHQAQPRLVGDQEQELLDTLADQLPRLLTRASELQTECMGLRKGHGTLGQGLSALQSEQGRLIQLLSESQGHMAHLVNSVGDVLDALQRDRGLGRPRAKADLQRAPARGARPRGCATGSRPRDCLDVLLSGQQDDGIYSVFPTHYPAGFQVYCDMRTDGGGWTVFQRREDGSVNFFRGWDAYRDGFGRLTGEHWLGLKRIHALTTQTAYELHVDLEDFDNGTAYARYGSFGVGLFSVDPEEDGYPLTVADYSGTAGDSLLKHSGMRFTTKDRDSDHSENNCAAFYRGAWWYRNCHTSNLNGQYLRGAHTSYADGVEWSSWTGWQYSLKFSEMKIRPVREDR</sequence>
<feature type="chain" id="PRO_0000294316" description="Fibrinogen C domain-containing protein 1">
    <location>
        <begin position="1"/>
        <end position="431"/>
    </location>
</feature>
<feature type="topological domain" description="Cytoplasmic" evidence="2">
    <location>
        <begin position="1"/>
        <end position="3"/>
    </location>
</feature>
<feature type="transmembrane region" description="Helical; Signal-anchor for type II membrane protein" evidence="2">
    <location>
        <begin position="4"/>
        <end position="24"/>
    </location>
</feature>
<feature type="topological domain" description="Extracellular" evidence="2">
    <location>
        <begin position="25"/>
        <end position="431"/>
    </location>
</feature>
<feature type="domain" description="Fibrinogen C-terminal" evidence="3">
    <location>
        <begin position="205"/>
        <end position="428"/>
    </location>
</feature>
<feature type="binding site" evidence="1">
    <location>
        <position position="363"/>
    </location>
    <ligand>
        <name>Ca(2+)</name>
        <dbReference type="ChEBI" id="CHEBI:29108"/>
    </ligand>
</feature>
<feature type="binding site" evidence="1">
    <location>
        <position position="365"/>
    </location>
    <ligand>
        <name>Ca(2+)</name>
        <dbReference type="ChEBI" id="CHEBI:29108"/>
    </ligand>
</feature>
<feature type="site" description="Implicated in ligand binding" evidence="1">
    <location>
        <position position="375"/>
    </location>
</feature>
<feature type="site" description="Implicated in ligand binding" evidence="1">
    <location>
        <position position="385"/>
    </location>
</feature>
<feature type="site" description="Implicated in ligand binding" evidence="1">
    <location>
        <position position="401"/>
    </location>
</feature>
<feature type="site" description="Implicated in ligand binding" evidence="1">
    <location>
        <position position="402"/>
    </location>
</feature>
<feature type="glycosylation site" description="N-linked (GlcNAc...) asparagine" evidence="2">
    <location>
        <position position="310"/>
    </location>
</feature>
<feature type="disulfide bond" evidence="3">
    <location>
        <begin position="214"/>
        <end position="243"/>
    </location>
</feature>
<feature type="disulfide bond" evidence="3">
    <location>
        <begin position="371"/>
        <end position="384"/>
    </location>
</feature>